<keyword id="KW-0004">4Fe-4S</keyword>
<keyword id="KW-0028">Amino-acid biosynthesis</keyword>
<keyword id="KW-0100">Branched-chain amino acid biosynthesis</keyword>
<keyword id="KW-0408">Iron</keyword>
<keyword id="KW-0411">Iron-sulfur</keyword>
<keyword id="KW-0432">Leucine biosynthesis</keyword>
<keyword id="KW-0456">Lyase</keyword>
<keyword id="KW-0479">Metal-binding</keyword>
<sequence>MAQTLYDKLWNTHVVHTEEDGTTLLYIDRQLLHEVTSPQAFEGLKIAQRPVWRISANLAVSDHNVPTTDRSHGIADPVSKLQVDTLDSNCDAFGITQFKMNDVRQGIVHIIGPEQGATLPGMTIVCGDSHTSTHGAFGALAHGIGTSEVEHVLATQTLLQKKSKNMLVKVEGALPRGCTAKDIVLAIIGKIGTAGGTGYAIEFGGSTIRALTMEGRMTVCNMAIEAGARAGMVAVDDTTIDYLKGRPFVPTGAEWDQAVEYWRQFKSDDGAQFDRVVELNAAEIVPQVTWGTSPEMVTSIDGRVPDPEREKDPVKRDAMERALAYMALEPNTPIESIKVDKIFIGSCTNARIEDIRAAAYVVKKLNRRVASNVRLAMVVPGSGLVKAQAEREGLDKVFTDAGFEWREPGCSMCLAMNADRLEPGERCASTSNRNFEGRQGAGGRTHLVSPAMAAAAAIEGHFVDIRQLG</sequence>
<organism>
    <name type="scientific">Burkholderia orbicola (strain MC0-3)</name>
    <dbReference type="NCBI Taxonomy" id="406425"/>
    <lineage>
        <taxon>Bacteria</taxon>
        <taxon>Pseudomonadati</taxon>
        <taxon>Pseudomonadota</taxon>
        <taxon>Betaproteobacteria</taxon>
        <taxon>Burkholderiales</taxon>
        <taxon>Burkholderiaceae</taxon>
        <taxon>Burkholderia</taxon>
        <taxon>Burkholderia cepacia complex</taxon>
        <taxon>Burkholderia orbicola</taxon>
    </lineage>
</organism>
<feature type="chain" id="PRO_1000135674" description="3-isopropylmalate dehydratase large subunit">
    <location>
        <begin position="1"/>
        <end position="469"/>
    </location>
</feature>
<feature type="binding site" evidence="1">
    <location>
        <position position="347"/>
    </location>
    <ligand>
        <name>[4Fe-4S] cluster</name>
        <dbReference type="ChEBI" id="CHEBI:49883"/>
    </ligand>
</feature>
<feature type="binding site" evidence="1">
    <location>
        <position position="410"/>
    </location>
    <ligand>
        <name>[4Fe-4S] cluster</name>
        <dbReference type="ChEBI" id="CHEBI:49883"/>
    </ligand>
</feature>
<feature type="binding site" evidence="1">
    <location>
        <position position="413"/>
    </location>
    <ligand>
        <name>[4Fe-4S] cluster</name>
        <dbReference type="ChEBI" id="CHEBI:49883"/>
    </ligand>
</feature>
<protein>
    <recommendedName>
        <fullName evidence="1">3-isopropylmalate dehydratase large subunit</fullName>
        <ecNumber evidence="1">4.2.1.33</ecNumber>
    </recommendedName>
    <alternativeName>
        <fullName evidence="1">Alpha-IPM isomerase</fullName>
        <shortName evidence="1">IPMI</shortName>
    </alternativeName>
    <alternativeName>
        <fullName evidence="1">Isopropylmalate isomerase</fullName>
    </alternativeName>
</protein>
<accession>B1K377</accession>
<gene>
    <name evidence="1" type="primary">leuC</name>
    <name type="ordered locus">Bcenmc03_3579</name>
</gene>
<evidence type="ECO:0000255" key="1">
    <source>
        <dbReference type="HAMAP-Rule" id="MF_01026"/>
    </source>
</evidence>
<name>LEUC_BURO0</name>
<reference key="1">
    <citation type="submission" date="2008-02" db="EMBL/GenBank/DDBJ databases">
        <title>Complete sequence of chromosome 2 of Burkholderia cenocepacia MC0-3.</title>
        <authorList>
            <person name="Copeland A."/>
            <person name="Lucas S."/>
            <person name="Lapidus A."/>
            <person name="Barry K."/>
            <person name="Bruce D."/>
            <person name="Goodwin L."/>
            <person name="Glavina del Rio T."/>
            <person name="Dalin E."/>
            <person name="Tice H."/>
            <person name="Pitluck S."/>
            <person name="Chain P."/>
            <person name="Malfatti S."/>
            <person name="Shin M."/>
            <person name="Vergez L."/>
            <person name="Schmutz J."/>
            <person name="Larimer F."/>
            <person name="Land M."/>
            <person name="Hauser L."/>
            <person name="Kyrpides N."/>
            <person name="Mikhailova N."/>
            <person name="Tiedje J."/>
            <person name="Richardson P."/>
        </authorList>
    </citation>
    <scope>NUCLEOTIDE SEQUENCE [LARGE SCALE GENOMIC DNA]</scope>
    <source>
        <strain>MC0-3</strain>
    </source>
</reference>
<proteinExistence type="inferred from homology"/>
<comment type="function">
    <text evidence="1">Catalyzes the isomerization between 2-isopropylmalate and 3-isopropylmalate, via the formation of 2-isopropylmaleate.</text>
</comment>
<comment type="catalytic activity">
    <reaction evidence="1">
        <text>(2R,3S)-3-isopropylmalate = (2S)-2-isopropylmalate</text>
        <dbReference type="Rhea" id="RHEA:32287"/>
        <dbReference type="ChEBI" id="CHEBI:1178"/>
        <dbReference type="ChEBI" id="CHEBI:35121"/>
        <dbReference type="EC" id="4.2.1.33"/>
    </reaction>
</comment>
<comment type="cofactor">
    <cofactor evidence="1">
        <name>[4Fe-4S] cluster</name>
        <dbReference type="ChEBI" id="CHEBI:49883"/>
    </cofactor>
    <text evidence="1">Binds 1 [4Fe-4S] cluster per subunit.</text>
</comment>
<comment type="pathway">
    <text evidence="1">Amino-acid biosynthesis; L-leucine biosynthesis; L-leucine from 3-methyl-2-oxobutanoate: step 2/4.</text>
</comment>
<comment type="subunit">
    <text evidence="1">Heterodimer of LeuC and LeuD.</text>
</comment>
<comment type="similarity">
    <text evidence="1">Belongs to the aconitase/IPM isomerase family. LeuC type 1 subfamily.</text>
</comment>
<dbReference type="EC" id="4.2.1.33" evidence="1"/>
<dbReference type="EMBL" id="CP000959">
    <property type="protein sequence ID" value="ACA92731.1"/>
    <property type="molecule type" value="Genomic_DNA"/>
</dbReference>
<dbReference type="RefSeq" id="WP_006479340.1">
    <property type="nucleotide sequence ID" value="NC_010515.1"/>
</dbReference>
<dbReference type="SMR" id="B1K377"/>
<dbReference type="GeneID" id="83050355"/>
<dbReference type="KEGG" id="bcm:Bcenmc03_3579"/>
<dbReference type="HOGENOM" id="CLU_006714_3_4_4"/>
<dbReference type="UniPathway" id="UPA00048">
    <property type="reaction ID" value="UER00071"/>
</dbReference>
<dbReference type="Proteomes" id="UP000002169">
    <property type="component" value="Chromosome 2"/>
</dbReference>
<dbReference type="GO" id="GO:0003861">
    <property type="term" value="F:3-isopropylmalate dehydratase activity"/>
    <property type="evidence" value="ECO:0007669"/>
    <property type="project" value="UniProtKB-UniRule"/>
</dbReference>
<dbReference type="GO" id="GO:0051539">
    <property type="term" value="F:4 iron, 4 sulfur cluster binding"/>
    <property type="evidence" value="ECO:0007669"/>
    <property type="project" value="UniProtKB-KW"/>
</dbReference>
<dbReference type="GO" id="GO:0046872">
    <property type="term" value="F:metal ion binding"/>
    <property type="evidence" value="ECO:0007669"/>
    <property type="project" value="UniProtKB-KW"/>
</dbReference>
<dbReference type="GO" id="GO:0009098">
    <property type="term" value="P:L-leucine biosynthetic process"/>
    <property type="evidence" value="ECO:0007669"/>
    <property type="project" value="UniProtKB-UniRule"/>
</dbReference>
<dbReference type="CDD" id="cd01583">
    <property type="entry name" value="IPMI"/>
    <property type="match status" value="1"/>
</dbReference>
<dbReference type="FunFam" id="3.30.499.10:FF:000007">
    <property type="entry name" value="3-isopropylmalate dehydratase large subunit"/>
    <property type="match status" value="1"/>
</dbReference>
<dbReference type="Gene3D" id="3.30.499.10">
    <property type="entry name" value="Aconitase, domain 3"/>
    <property type="match status" value="2"/>
</dbReference>
<dbReference type="HAMAP" id="MF_01026">
    <property type="entry name" value="LeuC_type1"/>
    <property type="match status" value="1"/>
</dbReference>
<dbReference type="InterPro" id="IPR004430">
    <property type="entry name" value="3-IsopropMal_deHydase_lsu"/>
</dbReference>
<dbReference type="InterPro" id="IPR015931">
    <property type="entry name" value="Acnase/IPM_dHydase_lsu_aba_1/3"/>
</dbReference>
<dbReference type="InterPro" id="IPR001030">
    <property type="entry name" value="Acoase/IPM_deHydtase_lsu_aba"/>
</dbReference>
<dbReference type="InterPro" id="IPR018136">
    <property type="entry name" value="Aconitase_4Fe-4S_BS"/>
</dbReference>
<dbReference type="InterPro" id="IPR036008">
    <property type="entry name" value="Aconitase_4Fe-4S_dom"/>
</dbReference>
<dbReference type="InterPro" id="IPR050067">
    <property type="entry name" value="IPM_dehydratase_rel_enz"/>
</dbReference>
<dbReference type="InterPro" id="IPR033941">
    <property type="entry name" value="IPMI_cat"/>
</dbReference>
<dbReference type="NCBIfam" id="TIGR00170">
    <property type="entry name" value="leuC"/>
    <property type="match status" value="1"/>
</dbReference>
<dbReference type="NCBIfam" id="NF004016">
    <property type="entry name" value="PRK05478.1"/>
    <property type="match status" value="1"/>
</dbReference>
<dbReference type="NCBIfam" id="NF009116">
    <property type="entry name" value="PRK12466.1"/>
    <property type="match status" value="1"/>
</dbReference>
<dbReference type="PANTHER" id="PTHR43822:SF9">
    <property type="entry name" value="3-ISOPROPYLMALATE DEHYDRATASE"/>
    <property type="match status" value="1"/>
</dbReference>
<dbReference type="PANTHER" id="PTHR43822">
    <property type="entry name" value="HOMOACONITASE, MITOCHONDRIAL-RELATED"/>
    <property type="match status" value="1"/>
</dbReference>
<dbReference type="Pfam" id="PF00330">
    <property type="entry name" value="Aconitase"/>
    <property type="match status" value="1"/>
</dbReference>
<dbReference type="PRINTS" id="PR00415">
    <property type="entry name" value="ACONITASE"/>
</dbReference>
<dbReference type="SUPFAM" id="SSF53732">
    <property type="entry name" value="Aconitase iron-sulfur domain"/>
    <property type="match status" value="1"/>
</dbReference>
<dbReference type="PROSITE" id="PS00450">
    <property type="entry name" value="ACONITASE_1"/>
    <property type="match status" value="1"/>
</dbReference>
<dbReference type="PROSITE" id="PS01244">
    <property type="entry name" value="ACONITASE_2"/>
    <property type="match status" value="1"/>
</dbReference>